<feature type="chain" id="PRO_1000118051" description="N-acetyl-gamma-glutamyl-phosphate reductase">
    <location>
        <begin position="1"/>
        <end position="344"/>
    </location>
</feature>
<feature type="active site" evidence="1">
    <location>
        <position position="149"/>
    </location>
</feature>
<gene>
    <name evidence="1" type="primary">argC</name>
    <name type="ordered locus">AFE_3073</name>
</gene>
<proteinExistence type="inferred from homology"/>
<dbReference type="EC" id="1.2.1.38" evidence="1"/>
<dbReference type="EMBL" id="CP001219">
    <property type="protein sequence ID" value="ACK77845.1"/>
    <property type="molecule type" value="Genomic_DNA"/>
</dbReference>
<dbReference type="RefSeq" id="WP_012537583.1">
    <property type="nucleotide sequence ID" value="NC_011761.1"/>
</dbReference>
<dbReference type="SMR" id="B7JAI2"/>
<dbReference type="STRING" id="243159.AFE_3073"/>
<dbReference type="PaxDb" id="243159-AFE_3073"/>
<dbReference type="GeneID" id="65282072"/>
<dbReference type="KEGG" id="afr:AFE_3073"/>
<dbReference type="eggNOG" id="COG0002">
    <property type="taxonomic scope" value="Bacteria"/>
</dbReference>
<dbReference type="HOGENOM" id="CLU_006384_0_1_6"/>
<dbReference type="UniPathway" id="UPA00068">
    <property type="reaction ID" value="UER00108"/>
</dbReference>
<dbReference type="Proteomes" id="UP000001362">
    <property type="component" value="Chromosome"/>
</dbReference>
<dbReference type="GO" id="GO:0005737">
    <property type="term" value="C:cytoplasm"/>
    <property type="evidence" value="ECO:0007669"/>
    <property type="project" value="UniProtKB-SubCell"/>
</dbReference>
<dbReference type="GO" id="GO:0003942">
    <property type="term" value="F:N-acetyl-gamma-glutamyl-phosphate reductase activity"/>
    <property type="evidence" value="ECO:0007669"/>
    <property type="project" value="UniProtKB-UniRule"/>
</dbReference>
<dbReference type="GO" id="GO:0051287">
    <property type="term" value="F:NAD binding"/>
    <property type="evidence" value="ECO:0007669"/>
    <property type="project" value="InterPro"/>
</dbReference>
<dbReference type="GO" id="GO:0070401">
    <property type="term" value="F:NADP+ binding"/>
    <property type="evidence" value="ECO:0007669"/>
    <property type="project" value="InterPro"/>
</dbReference>
<dbReference type="GO" id="GO:0006526">
    <property type="term" value="P:L-arginine biosynthetic process"/>
    <property type="evidence" value="ECO:0007669"/>
    <property type="project" value="UniProtKB-UniRule"/>
</dbReference>
<dbReference type="CDD" id="cd23934">
    <property type="entry name" value="AGPR_1_C"/>
    <property type="match status" value="1"/>
</dbReference>
<dbReference type="CDD" id="cd17895">
    <property type="entry name" value="AGPR_1_N"/>
    <property type="match status" value="1"/>
</dbReference>
<dbReference type="FunFam" id="3.30.360.10:FF:000014">
    <property type="entry name" value="N-acetyl-gamma-glutamyl-phosphate reductase"/>
    <property type="match status" value="1"/>
</dbReference>
<dbReference type="Gene3D" id="3.30.360.10">
    <property type="entry name" value="Dihydrodipicolinate Reductase, domain 2"/>
    <property type="match status" value="1"/>
</dbReference>
<dbReference type="Gene3D" id="3.40.50.720">
    <property type="entry name" value="NAD(P)-binding Rossmann-like Domain"/>
    <property type="match status" value="1"/>
</dbReference>
<dbReference type="HAMAP" id="MF_00150">
    <property type="entry name" value="ArgC_type1"/>
    <property type="match status" value="1"/>
</dbReference>
<dbReference type="InterPro" id="IPR023013">
    <property type="entry name" value="AGPR_AS"/>
</dbReference>
<dbReference type="InterPro" id="IPR000706">
    <property type="entry name" value="AGPR_type-1"/>
</dbReference>
<dbReference type="InterPro" id="IPR036291">
    <property type="entry name" value="NAD(P)-bd_dom_sf"/>
</dbReference>
<dbReference type="InterPro" id="IPR050085">
    <property type="entry name" value="NAGSA_dehydrogenase"/>
</dbReference>
<dbReference type="InterPro" id="IPR000534">
    <property type="entry name" value="Semialdehyde_DH_NAD-bd"/>
</dbReference>
<dbReference type="NCBIfam" id="TIGR01850">
    <property type="entry name" value="argC"/>
    <property type="match status" value="1"/>
</dbReference>
<dbReference type="PANTHER" id="PTHR32338:SF10">
    <property type="entry name" value="N-ACETYL-GAMMA-GLUTAMYL-PHOSPHATE REDUCTASE, CHLOROPLASTIC-RELATED"/>
    <property type="match status" value="1"/>
</dbReference>
<dbReference type="PANTHER" id="PTHR32338">
    <property type="entry name" value="N-ACETYL-GAMMA-GLUTAMYL-PHOSPHATE REDUCTASE, CHLOROPLASTIC-RELATED-RELATED"/>
    <property type="match status" value="1"/>
</dbReference>
<dbReference type="Pfam" id="PF01118">
    <property type="entry name" value="Semialdhyde_dh"/>
    <property type="match status" value="1"/>
</dbReference>
<dbReference type="Pfam" id="PF22698">
    <property type="entry name" value="Semialdhyde_dhC_1"/>
    <property type="match status" value="1"/>
</dbReference>
<dbReference type="SMART" id="SM00859">
    <property type="entry name" value="Semialdhyde_dh"/>
    <property type="match status" value="1"/>
</dbReference>
<dbReference type="SUPFAM" id="SSF55347">
    <property type="entry name" value="Glyceraldehyde-3-phosphate dehydrogenase-like, C-terminal domain"/>
    <property type="match status" value="1"/>
</dbReference>
<dbReference type="SUPFAM" id="SSF51735">
    <property type="entry name" value="NAD(P)-binding Rossmann-fold domains"/>
    <property type="match status" value="1"/>
</dbReference>
<dbReference type="PROSITE" id="PS01224">
    <property type="entry name" value="ARGC"/>
    <property type="match status" value="1"/>
</dbReference>
<name>ARGC_ACIF2</name>
<keyword id="KW-0028">Amino-acid biosynthesis</keyword>
<keyword id="KW-0055">Arginine biosynthesis</keyword>
<keyword id="KW-0963">Cytoplasm</keyword>
<keyword id="KW-0521">NADP</keyword>
<keyword id="KW-0560">Oxidoreductase</keyword>
<keyword id="KW-1185">Reference proteome</keyword>
<reference key="1">
    <citation type="journal article" date="2008" name="BMC Genomics">
        <title>Acidithiobacillus ferrooxidans metabolism: from genome sequence to industrial applications.</title>
        <authorList>
            <person name="Valdes J."/>
            <person name="Pedroso I."/>
            <person name="Quatrini R."/>
            <person name="Dodson R.J."/>
            <person name="Tettelin H."/>
            <person name="Blake R. II"/>
            <person name="Eisen J.A."/>
            <person name="Holmes D.S."/>
        </authorList>
    </citation>
    <scope>NUCLEOTIDE SEQUENCE [LARGE SCALE GENOMIC DNA]</scope>
    <source>
        <strain>ATCC 23270 / DSM 14882 / CIP 104768 / NCIMB 8455</strain>
    </source>
</reference>
<sequence length="344" mass="36666">MIRAGIVGGTGYTGVELLRLLLPHPEVELVAITSRAEAGQRVDEHFPNLRGHCNLSYTAPDPAILGTLDVVFFATPHGVAMDSAPKLLAEGVRIIDLGADFRLPDAEVFAQWYGMAHRAPEVLGEACYGLPEYYRTKISEARLIANPGCYPTAVILGLAPLLAEGLLQEDTLIADCKSGVSGAGRSAKVGLILPETADSVSAYGVGGHRHRPEIEAVLSDISGTPLELQFTPHLMPMIRGIHATLYGRLAQPMSDAALQDLFATRYASEPFVDVLPFGSHPATRSVRGANMCLIAVHQPRPGQVVVLSVIDNLVKGAAGQAIQNMNRLFSLAEDAGLMQIALLP</sequence>
<protein>
    <recommendedName>
        <fullName evidence="1">N-acetyl-gamma-glutamyl-phosphate reductase</fullName>
        <shortName evidence="1">AGPR</shortName>
        <ecNumber evidence="1">1.2.1.38</ecNumber>
    </recommendedName>
    <alternativeName>
        <fullName evidence="1">N-acetyl-glutamate semialdehyde dehydrogenase</fullName>
        <shortName evidence="1">NAGSA dehydrogenase</shortName>
    </alternativeName>
</protein>
<accession>B7JAI2</accession>
<evidence type="ECO:0000255" key="1">
    <source>
        <dbReference type="HAMAP-Rule" id="MF_00150"/>
    </source>
</evidence>
<organism>
    <name type="scientific">Acidithiobacillus ferrooxidans (strain ATCC 23270 / DSM 14882 / CIP 104768 / NCIMB 8455)</name>
    <name type="common">Ferrobacillus ferrooxidans (strain ATCC 23270)</name>
    <dbReference type="NCBI Taxonomy" id="243159"/>
    <lineage>
        <taxon>Bacteria</taxon>
        <taxon>Pseudomonadati</taxon>
        <taxon>Pseudomonadota</taxon>
        <taxon>Acidithiobacillia</taxon>
        <taxon>Acidithiobacillales</taxon>
        <taxon>Acidithiobacillaceae</taxon>
        <taxon>Acidithiobacillus</taxon>
    </lineage>
</organism>
<comment type="function">
    <text evidence="1">Catalyzes the NADPH-dependent reduction of N-acetyl-5-glutamyl phosphate to yield N-acetyl-L-glutamate 5-semialdehyde.</text>
</comment>
<comment type="catalytic activity">
    <reaction evidence="1">
        <text>N-acetyl-L-glutamate 5-semialdehyde + phosphate + NADP(+) = N-acetyl-L-glutamyl 5-phosphate + NADPH + H(+)</text>
        <dbReference type="Rhea" id="RHEA:21588"/>
        <dbReference type="ChEBI" id="CHEBI:15378"/>
        <dbReference type="ChEBI" id="CHEBI:29123"/>
        <dbReference type="ChEBI" id="CHEBI:43474"/>
        <dbReference type="ChEBI" id="CHEBI:57783"/>
        <dbReference type="ChEBI" id="CHEBI:57936"/>
        <dbReference type="ChEBI" id="CHEBI:58349"/>
        <dbReference type="EC" id="1.2.1.38"/>
    </reaction>
</comment>
<comment type="pathway">
    <text evidence="1">Amino-acid biosynthesis; L-arginine biosynthesis; N(2)-acetyl-L-ornithine from L-glutamate: step 3/4.</text>
</comment>
<comment type="subcellular location">
    <subcellularLocation>
        <location evidence="1">Cytoplasm</location>
    </subcellularLocation>
</comment>
<comment type="similarity">
    <text evidence="1">Belongs to the NAGSA dehydrogenase family. Type 1 subfamily.</text>
</comment>